<reference key="1">
    <citation type="journal article" date="1989" name="Gene">
        <title>Cloning and sequence analysis of cDNA for luciferase of a Japanese firefly, Luciola cruciata.</title>
        <authorList>
            <person name="Masuda T."/>
            <person name="Tatsumi H."/>
            <person name="Nakano E."/>
        </authorList>
    </citation>
    <scope>NUCLEOTIDE SEQUENCE [MRNA]</scope>
</reference>
<accession>P13129</accession>
<feature type="chain" id="PRO_0000193143" description="Luciferin 4-monooxygenase">
    <location>
        <begin position="1"/>
        <end position="548"/>
    </location>
</feature>
<feature type="short sequence motif" description="Microbody targeting signal" evidence="3">
    <location>
        <begin position="546"/>
        <end position="548"/>
    </location>
</feature>
<feature type="strand" evidence="6">
    <location>
        <begin position="10"/>
        <end position="12"/>
    </location>
</feature>
<feature type="helix" evidence="6">
    <location>
        <begin position="25"/>
        <end position="39"/>
    </location>
</feature>
<feature type="strand" evidence="6">
    <location>
        <begin position="42"/>
        <end position="46"/>
    </location>
</feature>
<feature type="turn" evidence="6">
    <location>
        <begin position="47"/>
        <end position="49"/>
    </location>
</feature>
<feature type="strand" evidence="6">
    <location>
        <begin position="52"/>
        <end position="54"/>
    </location>
</feature>
<feature type="helix" evidence="6">
    <location>
        <begin position="55"/>
        <end position="72"/>
    </location>
</feature>
<feature type="strand" evidence="6">
    <location>
        <begin position="79"/>
        <end position="83"/>
    </location>
</feature>
<feature type="turn" evidence="6">
    <location>
        <begin position="88"/>
        <end position="90"/>
    </location>
</feature>
<feature type="helix" evidence="6">
    <location>
        <begin position="91"/>
        <end position="100"/>
    </location>
</feature>
<feature type="strand" evidence="6">
    <location>
        <begin position="103"/>
        <end position="107"/>
    </location>
</feature>
<feature type="helix" evidence="6">
    <location>
        <begin position="113"/>
        <end position="123"/>
    </location>
</feature>
<feature type="strand" evidence="6">
    <location>
        <begin position="126"/>
        <end position="130"/>
    </location>
</feature>
<feature type="turn" evidence="6">
    <location>
        <begin position="132"/>
        <end position="134"/>
    </location>
</feature>
<feature type="helix" evidence="6">
    <location>
        <begin position="135"/>
        <end position="144"/>
    </location>
</feature>
<feature type="strand" evidence="6">
    <location>
        <begin position="150"/>
        <end position="153"/>
    </location>
</feature>
<feature type="helix" evidence="6">
    <location>
        <begin position="166"/>
        <end position="172"/>
    </location>
</feature>
<feature type="helix" evidence="6">
    <location>
        <begin position="180"/>
        <end position="182"/>
    </location>
</feature>
<feature type="turn" evidence="6">
    <location>
        <begin position="190"/>
        <end position="192"/>
    </location>
</feature>
<feature type="strand" evidence="6">
    <location>
        <begin position="194"/>
        <end position="198"/>
    </location>
</feature>
<feature type="strand" evidence="6">
    <location>
        <begin position="204"/>
        <end position="206"/>
    </location>
</feature>
<feature type="strand" evidence="6">
    <location>
        <begin position="210"/>
        <end position="213"/>
    </location>
</feature>
<feature type="helix" evidence="6">
    <location>
        <begin position="214"/>
        <end position="224"/>
    </location>
</feature>
<feature type="turn" evidence="6">
    <location>
        <begin position="227"/>
        <end position="229"/>
    </location>
</feature>
<feature type="strand" evidence="6">
    <location>
        <begin position="238"/>
        <end position="241"/>
    </location>
</feature>
<feature type="helix" evidence="6">
    <location>
        <begin position="248"/>
        <end position="259"/>
    </location>
</feature>
<feature type="strand" evidence="6">
    <location>
        <begin position="263"/>
        <end position="266"/>
    </location>
</feature>
<feature type="helix" evidence="6">
    <location>
        <begin position="272"/>
        <end position="281"/>
    </location>
</feature>
<feature type="strand" evidence="6">
    <location>
        <begin position="284"/>
        <end position="289"/>
    </location>
</feature>
<feature type="helix" evidence="6">
    <location>
        <begin position="291"/>
        <end position="299"/>
    </location>
</feature>
<feature type="helix" evidence="6">
    <location>
        <begin position="303"/>
        <end position="305"/>
    </location>
</feature>
<feature type="strand" evidence="6">
    <location>
        <begin position="313"/>
        <end position="316"/>
    </location>
</feature>
<feature type="helix" evidence="6">
    <location>
        <begin position="323"/>
        <end position="332"/>
    </location>
</feature>
<feature type="strand" evidence="6">
    <location>
        <begin position="339"/>
        <end position="343"/>
    </location>
</feature>
<feature type="helix" evidence="6">
    <location>
        <begin position="345"/>
        <end position="347"/>
    </location>
</feature>
<feature type="strand" evidence="6">
    <location>
        <begin position="348"/>
        <end position="353"/>
    </location>
</feature>
<feature type="strand" evidence="6">
    <location>
        <begin position="365"/>
        <end position="367"/>
    </location>
</feature>
<feature type="strand" evidence="6">
    <location>
        <begin position="372"/>
        <end position="376"/>
    </location>
</feature>
<feature type="turn" evidence="6">
    <location>
        <begin position="378"/>
        <end position="380"/>
    </location>
</feature>
<feature type="strand" evidence="6">
    <location>
        <begin position="390"/>
        <end position="396"/>
    </location>
</feature>
<feature type="strand" evidence="6">
    <location>
        <begin position="401"/>
        <end position="403"/>
    </location>
</feature>
<feature type="helix" evidence="6">
    <location>
        <begin position="407"/>
        <end position="413"/>
    </location>
</feature>
<feature type="strand" evidence="6">
    <location>
        <begin position="420"/>
        <end position="428"/>
    </location>
</feature>
<feature type="strand" evidence="6">
    <location>
        <begin position="434"/>
        <end position="439"/>
    </location>
</feature>
<feature type="helix" evidence="6">
    <location>
        <begin position="440"/>
        <end position="442"/>
    </location>
</feature>
<feature type="strand" evidence="5">
    <location>
        <begin position="444"/>
        <end position="446"/>
    </location>
</feature>
<feature type="strand" evidence="5">
    <location>
        <begin position="449"/>
        <end position="451"/>
    </location>
</feature>
<feature type="helix" evidence="6">
    <location>
        <begin position="453"/>
        <end position="461"/>
    </location>
</feature>
<feature type="strand" evidence="6">
    <location>
        <begin position="466"/>
        <end position="476"/>
    </location>
</feature>
<feature type="turn" evidence="6">
    <location>
        <begin position="477"/>
        <end position="479"/>
    </location>
</feature>
<feature type="strand" evidence="6">
    <location>
        <begin position="480"/>
        <end position="489"/>
    </location>
</feature>
<feature type="helix" evidence="6">
    <location>
        <begin position="497"/>
        <end position="505"/>
    </location>
</feature>
<feature type="helix" evidence="6">
    <location>
        <begin position="510"/>
        <end position="512"/>
    </location>
</feature>
<feature type="strand" evidence="6">
    <location>
        <begin position="518"/>
        <end position="520"/>
    </location>
</feature>
<feature type="helix" evidence="6">
    <location>
        <begin position="534"/>
        <end position="542"/>
    </location>
</feature>
<comment type="function">
    <text evidence="2">Produces green light with a wavelength of 544 nm.</text>
</comment>
<comment type="catalytic activity">
    <reaction evidence="2">
        <text>firefly D-luciferin + ATP + O2 = firefly oxyluciferin + hnu + AMP + CO2 + diphosphate</text>
        <dbReference type="Rhea" id="RHEA:10732"/>
        <dbReference type="ChEBI" id="CHEBI:15379"/>
        <dbReference type="ChEBI" id="CHEBI:16526"/>
        <dbReference type="ChEBI" id="CHEBI:16792"/>
        <dbReference type="ChEBI" id="CHEBI:30212"/>
        <dbReference type="ChEBI" id="CHEBI:30616"/>
        <dbReference type="ChEBI" id="CHEBI:33019"/>
        <dbReference type="ChEBI" id="CHEBI:58038"/>
        <dbReference type="ChEBI" id="CHEBI:456215"/>
        <dbReference type="EC" id="1.13.12.7"/>
    </reaction>
</comment>
<comment type="cofactor">
    <cofactor>
        <name>Mg(2+)</name>
        <dbReference type="ChEBI" id="CHEBI:18420"/>
    </cofactor>
</comment>
<comment type="subcellular location">
    <subcellularLocation>
        <location evidence="1">Peroxisome</location>
    </subcellularLocation>
</comment>
<comment type="similarity">
    <text evidence="4">Belongs to the ATP-dependent AMP-binding enzyme family.</text>
</comment>
<organism>
    <name type="scientific">Nipponoluciola cruciata</name>
    <name type="common">Genji firefly</name>
    <name type="synonym">Luciola cruciata</name>
    <dbReference type="NCBI Taxonomy" id="7051"/>
    <lineage>
        <taxon>Eukaryota</taxon>
        <taxon>Metazoa</taxon>
        <taxon>Ecdysozoa</taxon>
        <taxon>Arthropoda</taxon>
        <taxon>Hexapoda</taxon>
        <taxon>Insecta</taxon>
        <taxon>Pterygota</taxon>
        <taxon>Neoptera</taxon>
        <taxon>Endopterygota</taxon>
        <taxon>Coleoptera</taxon>
        <taxon>Polyphaga</taxon>
        <taxon>Elateriformia</taxon>
        <taxon>Elateroidea</taxon>
        <taxon>Lampyridae</taxon>
        <taxon>Luciolinae</taxon>
        <taxon>Nipponoluciola</taxon>
    </lineage>
</organism>
<dbReference type="EC" id="1.13.12.7" evidence="2"/>
<dbReference type="EMBL" id="M26194">
    <property type="protein sequence ID" value="AAA29135.1"/>
    <property type="molecule type" value="mRNA"/>
</dbReference>
<dbReference type="PIR" id="JS0181">
    <property type="entry name" value="JS0181"/>
</dbReference>
<dbReference type="PDB" id="2D1Q">
    <property type="method" value="X-ray"/>
    <property type="resolution" value="2.30 A"/>
    <property type="chains" value="A=1-548"/>
</dbReference>
<dbReference type="PDB" id="2D1R">
    <property type="method" value="X-ray"/>
    <property type="resolution" value="1.60 A"/>
    <property type="chains" value="A=1-548"/>
</dbReference>
<dbReference type="PDB" id="2D1S">
    <property type="method" value="X-ray"/>
    <property type="resolution" value="1.30 A"/>
    <property type="chains" value="A=1-548"/>
</dbReference>
<dbReference type="PDB" id="2D1T">
    <property type="method" value="X-ray"/>
    <property type="resolution" value="1.45 A"/>
    <property type="chains" value="A=1-548"/>
</dbReference>
<dbReference type="PDBsum" id="2D1Q"/>
<dbReference type="PDBsum" id="2D1R"/>
<dbReference type="PDBsum" id="2D1S"/>
<dbReference type="PDBsum" id="2D1T"/>
<dbReference type="SMR" id="P13129"/>
<dbReference type="BRENDA" id="1.13.12.7">
    <property type="organism ID" value="3080"/>
</dbReference>
<dbReference type="EvolutionaryTrace" id="P13129"/>
<dbReference type="GO" id="GO:0005777">
    <property type="term" value="C:peroxisome"/>
    <property type="evidence" value="ECO:0007669"/>
    <property type="project" value="UniProtKB-SubCell"/>
</dbReference>
<dbReference type="GO" id="GO:0005524">
    <property type="term" value="F:ATP binding"/>
    <property type="evidence" value="ECO:0007669"/>
    <property type="project" value="UniProtKB-KW"/>
</dbReference>
<dbReference type="GO" id="GO:0016405">
    <property type="term" value="F:CoA-ligase activity"/>
    <property type="evidence" value="ECO:0007669"/>
    <property type="project" value="TreeGrafter"/>
</dbReference>
<dbReference type="GO" id="GO:0046872">
    <property type="term" value="F:metal ion binding"/>
    <property type="evidence" value="ECO:0007669"/>
    <property type="project" value="UniProtKB-KW"/>
</dbReference>
<dbReference type="GO" id="GO:0047077">
    <property type="term" value="F:Photinus-luciferin 4-monooxygenase (ATP-hydrolyzing) activity"/>
    <property type="evidence" value="ECO:0007669"/>
    <property type="project" value="UniProtKB-EC"/>
</dbReference>
<dbReference type="GO" id="GO:0008218">
    <property type="term" value="P:bioluminescence"/>
    <property type="evidence" value="ECO:0007669"/>
    <property type="project" value="UniProtKB-KW"/>
</dbReference>
<dbReference type="CDD" id="cd17642">
    <property type="entry name" value="Firefly_Luc"/>
    <property type="match status" value="1"/>
</dbReference>
<dbReference type="FunFam" id="3.30.300.30:FF:000007">
    <property type="entry name" value="4-coumarate--CoA ligase 2"/>
    <property type="match status" value="1"/>
</dbReference>
<dbReference type="FunFam" id="3.40.50.12780:FF:000003">
    <property type="entry name" value="Long-chain-fatty-acid--CoA ligase FadD"/>
    <property type="match status" value="1"/>
</dbReference>
<dbReference type="FunFam" id="2.30.38.10:FF:000005">
    <property type="entry name" value="Luciferin 4-monooxygenase"/>
    <property type="match status" value="1"/>
</dbReference>
<dbReference type="Gene3D" id="3.30.300.30">
    <property type="match status" value="1"/>
</dbReference>
<dbReference type="Gene3D" id="3.40.50.980">
    <property type="match status" value="2"/>
</dbReference>
<dbReference type="Gene3D" id="2.30.38.10">
    <property type="entry name" value="Luciferase, Domain 3"/>
    <property type="match status" value="1"/>
</dbReference>
<dbReference type="InterPro" id="IPR025110">
    <property type="entry name" value="AMP-bd_C"/>
</dbReference>
<dbReference type="InterPro" id="IPR045851">
    <property type="entry name" value="AMP-bd_C_sf"/>
</dbReference>
<dbReference type="InterPro" id="IPR020845">
    <property type="entry name" value="AMP-binding_CS"/>
</dbReference>
<dbReference type="InterPro" id="IPR000873">
    <property type="entry name" value="AMP-dep_synth/lig_dom"/>
</dbReference>
<dbReference type="PANTHER" id="PTHR24096:SF423">
    <property type="entry name" value="GM05240P"/>
    <property type="match status" value="1"/>
</dbReference>
<dbReference type="PANTHER" id="PTHR24096">
    <property type="entry name" value="LONG-CHAIN-FATTY-ACID--COA LIGASE"/>
    <property type="match status" value="1"/>
</dbReference>
<dbReference type="Pfam" id="PF00501">
    <property type="entry name" value="AMP-binding"/>
    <property type="match status" value="1"/>
</dbReference>
<dbReference type="Pfam" id="PF13193">
    <property type="entry name" value="AMP-binding_C"/>
    <property type="match status" value="1"/>
</dbReference>
<dbReference type="SUPFAM" id="SSF56801">
    <property type="entry name" value="Acetyl-CoA synthetase-like"/>
    <property type="match status" value="1"/>
</dbReference>
<dbReference type="PROSITE" id="PS00455">
    <property type="entry name" value="AMP_BINDING"/>
    <property type="match status" value="1"/>
</dbReference>
<keyword id="KW-0002">3D-structure</keyword>
<keyword id="KW-0067">ATP-binding</keyword>
<keyword id="KW-0455">Luminescence</keyword>
<keyword id="KW-0460">Magnesium</keyword>
<keyword id="KW-0479">Metal-binding</keyword>
<keyword id="KW-0503">Monooxygenase</keyword>
<keyword id="KW-0547">Nucleotide-binding</keyword>
<keyword id="KW-0560">Oxidoreductase</keyword>
<keyword id="KW-0576">Peroxisome</keyword>
<keyword id="KW-0599">Photoprotein</keyword>
<evidence type="ECO:0000250" key="1"/>
<evidence type="ECO:0000250" key="2">
    <source>
        <dbReference type="UniProtKB" id="Q26304"/>
    </source>
</evidence>
<evidence type="ECO:0000255" key="3"/>
<evidence type="ECO:0000305" key="4"/>
<evidence type="ECO:0007829" key="5">
    <source>
        <dbReference type="PDB" id="2D1Q"/>
    </source>
</evidence>
<evidence type="ECO:0007829" key="6">
    <source>
        <dbReference type="PDB" id="2D1S"/>
    </source>
</evidence>
<sequence>MENMENDENIVVGPKPFYPIEEGSAGTQLRKYMERYAKLGAIAFTNAVTGVDYSYAEYLEKSCCLGKALQNYGLVVDGRIALCSENCEEFFIPVIAGLFIGVGVAPTNEIYTLRELVHSLGISKPTIVFSSKKGLDKVITVQKTVTTIKTIVILDSKVDYRGYQCLDTFIKRNTPPGFQASSFKTVEVDRKEQVALIMNSSGSTGLPKGVQLTHENTVTRFSHARDPIYGNQVSPGTAVLTVVPFHHGFGMFTTLGYLICGFRVVMLTKFDEETFLKTLQDYKCTSVILVPTLFAILNKSELLNKYDLSNLVEIASGGAPLSKEVGEAVARRFNLPGVRQGYGLTETTSAIIITPEGDDKPGASGKVVPLFKAKVIDLDTKKSLGPNRRGEVCVKGPMLMKGYVNNPEATKELIDEEGWLHTGDIGYYDEEKHFFIVDRLKSLIKYKGYQVPPAELESVLLQHPSIFDAGVAGVPDPVAGELPGAVVVLESGKNMTEKEVMDYVASQVSNAKRLRGGVRFVDEVPKGLTGKIDGRAIREILKKPVAKM</sequence>
<protein>
    <recommendedName>
        <fullName>Luciferin 4-monooxygenase</fullName>
        <shortName>Luciferase</shortName>
        <ecNumber evidence="2">1.13.12.7</ecNumber>
    </recommendedName>
</protein>
<proteinExistence type="evidence at protein level"/>
<name>LUCI_NIPCR</name>